<name>MSHR_ALOPI</name>
<comment type="function">
    <text evidence="1">Receptor for MSH (alpha, beta and gamma) and ACTH. The activity of this receptor is mediated by G proteins which activate adenylate cyclase. Mediates melanogenesis, the production of eumelanin (black/brown) and phaeomelanin (red/yellow), via regulation of cAMP signaling in melanocytes.</text>
</comment>
<comment type="subunit">
    <text evidence="1">Interacts with MGRN1, but does not undergo MGRN1-mediated ubiquitination; this interaction competes with GNAS-binding and thus inhibits agonist-induced cAMP production. Interacts with OPN3; the interaction results in a decrease in MC1R-mediated cAMP signaling and ultimately a decrease in melanin production in melanocytes.</text>
</comment>
<comment type="subcellular location">
    <subcellularLocation>
        <location evidence="1">Cell membrane</location>
        <topology evidence="2">Multi-pass membrane protein</topology>
    </subcellularLocation>
</comment>
<comment type="similarity">
    <text evidence="3">Belongs to the G-protein coupled receptor 1 family.</text>
</comment>
<gene>
    <name type="primary">MC1R</name>
</gene>
<proteinExistence type="inferred from homology"/>
<keyword id="KW-1003">Cell membrane</keyword>
<keyword id="KW-0297">G-protein coupled receptor</keyword>
<keyword id="KW-0325">Glycoprotein</keyword>
<keyword id="KW-0449">Lipoprotein</keyword>
<keyword id="KW-0472">Membrane</keyword>
<keyword id="KW-0564">Palmitate</keyword>
<keyword id="KW-0675">Receptor</keyword>
<keyword id="KW-0807">Transducer</keyword>
<keyword id="KW-0812">Transmembrane</keyword>
<keyword id="KW-1133">Transmembrane helix</keyword>
<reference key="1">
    <citation type="journal article" date="2003" name="Am. J. Phys. Anthropol.">
        <title>Evolution of a pigmentation gene, the melanocortin-1 receptor, in primates.</title>
        <authorList>
            <person name="Mundy N.I."/>
            <person name="Kelly J."/>
        </authorList>
    </citation>
    <scope>NUCLEOTIDE SEQUENCE [GENOMIC DNA]</scope>
    <source>
        <strain>Isolate 4</strain>
    </source>
</reference>
<protein>
    <recommendedName>
        <fullName>Melanocyte-stimulating hormone receptor</fullName>
        <shortName>MSH-R</shortName>
    </recommendedName>
    <alternativeName>
        <fullName>Melanocortin receptor 1</fullName>
        <shortName>MC1-R</shortName>
    </alternativeName>
</protein>
<feature type="chain" id="PRO_0000069789" description="Melanocyte-stimulating hormone receptor">
    <location>
        <begin position="1"/>
        <end position="317"/>
    </location>
</feature>
<feature type="topological domain" description="Extracellular" evidence="2">
    <location>
        <begin position="1"/>
        <end position="37"/>
    </location>
</feature>
<feature type="transmembrane region" description="Helical; Name=1" evidence="2">
    <location>
        <begin position="38"/>
        <end position="63"/>
    </location>
</feature>
<feature type="topological domain" description="Cytoplasmic" evidence="2">
    <location>
        <begin position="64"/>
        <end position="72"/>
    </location>
</feature>
<feature type="transmembrane region" description="Helical; Name=2" evidence="2">
    <location>
        <begin position="73"/>
        <end position="93"/>
    </location>
</feature>
<feature type="topological domain" description="Extracellular" evidence="2">
    <location>
        <begin position="94"/>
        <end position="118"/>
    </location>
</feature>
<feature type="transmembrane region" description="Helical; Name=3" evidence="2">
    <location>
        <begin position="119"/>
        <end position="140"/>
    </location>
</feature>
<feature type="topological domain" description="Cytoplasmic" evidence="2">
    <location>
        <begin position="141"/>
        <end position="163"/>
    </location>
</feature>
<feature type="transmembrane region" description="Helical; Name=4" evidence="2">
    <location>
        <begin position="164"/>
        <end position="183"/>
    </location>
</feature>
<feature type="topological domain" description="Extracellular" evidence="2">
    <location>
        <begin position="184"/>
        <end position="191"/>
    </location>
</feature>
<feature type="transmembrane region" description="Helical; Name=5" evidence="2">
    <location>
        <begin position="192"/>
        <end position="211"/>
    </location>
</feature>
<feature type="topological domain" description="Cytoplasmic" evidence="2">
    <location>
        <begin position="212"/>
        <end position="240"/>
    </location>
</feature>
<feature type="transmembrane region" description="Helical; Name=6" evidence="2">
    <location>
        <begin position="241"/>
        <end position="266"/>
    </location>
</feature>
<feature type="topological domain" description="Extracellular" evidence="2">
    <location>
        <begin position="267"/>
        <end position="279"/>
    </location>
</feature>
<feature type="transmembrane region" description="Helical; Name=7" evidence="2">
    <location>
        <begin position="280"/>
        <end position="300"/>
    </location>
</feature>
<feature type="topological domain" description="Cytoplasmic" evidence="2">
    <location>
        <begin position="301"/>
        <end position="317"/>
    </location>
</feature>
<feature type="lipid moiety-binding region" description="S-palmitoyl cysteine" evidence="2">
    <location>
        <position position="315"/>
    </location>
</feature>
<feature type="glycosylation site" description="N-linked (GlcNAc...) asparagine" evidence="2">
    <location>
        <position position="29"/>
    </location>
</feature>
<sequence>MPMQGAQRRLLGSLNSTPTATPNLGLAANHTGAPCLEVSIPDGLFLSLGLVSLVENVLVVAAIAKNRNLHSPMYCFICCLALSDLLVSGSNMLEMAVILLLEAGALATRASVVQQLQNTIDVLTCSSMLCSLCFLGAIAVDRYVSIFYALRYHSIVTLPRARRAIAAIWVASVLSSTLFIAYCDHAAVLLCLVVFFLAMLVLMAVLYVHMLARACQHAQGITRLHKRQLPAHQGFGLRGAATLTILLGIFFLCWGPFFLHLMLVVLCPQHLTCSCIFKNFKVFLTLIICNTIIDPLIYAFRSQELCRTLREVLLCSW</sequence>
<dbReference type="EMBL" id="AY205136">
    <property type="protein sequence ID" value="AAP31010.1"/>
    <property type="molecule type" value="Genomic_DNA"/>
</dbReference>
<dbReference type="SMR" id="Q864G1"/>
<dbReference type="GlyCosmos" id="Q864G1">
    <property type="glycosylation" value="1 site, No reported glycans"/>
</dbReference>
<dbReference type="GO" id="GO:0005886">
    <property type="term" value="C:plasma membrane"/>
    <property type="evidence" value="ECO:0000250"/>
    <property type="project" value="UniProtKB"/>
</dbReference>
<dbReference type="GO" id="GO:0004980">
    <property type="term" value="F:melanocyte-stimulating hormone receptor activity"/>
    <property type="evidence" value="ECO:0007669"/>
    <property type="project" value="InterPro"/>
</dbReference>
<dbReference type="GO" id="GO:0007189">
    <property type="term" value="P:adenylate cyclase-activating G protein-coupled receptor signaling pathway"/>
    <property type="evidence" value="ECO:0007669"/>
    <property type="project" value="UniProtKB-ARBA"/>
</dbReference>
<dbReference type="FunFam" id="1.20.1070.10:FF:000211">
    <property type="entry name" value="Melanocyte-stimulating hormone receptor"/>
    <property type="match status" value="1"/>
</dbReference>
<dbReference type="Gene3D" id="1.20.1070.10">
    <property type="entry name" value="Rhodopsin 7-helix transmembrane proteins"/>
    <property type="match status" value="1"/>
</dbReference>
<dbReference type="InterPro" id="IPR000276">
    <property type="entry name" value="GPCR_Rhodpsn"/>
</dbReference>
<dbReference type="InterPro" id="IPR017452">
    <property type="entry name" value="GPCR_Rhodpsn_7TM"/>
</dbReference>
<dbReference type="InterPro" id="IPR001671">
    <property type="entry name" value="Melcrt_ACTH_rcpt"/>
</dbReference>
<dbReference type="InterPro" id="IPR000761">
    <property type="entry name" value="MSH_rcpt"/>
</dbReference>
<dbReference type="PANTHER" id="PTHR22750">
    <property type="entry name" value="G-PROTEIN COUPLED RECEPTOR"/>
    <property type="match status" value="1"/>
</dbReference>
<dbReference type="Pfam" id="PF00001">
    <property type="entry name" value="7tm_1"/>
    <property type="match status" value="2"/>
</dbReference>
<dbReference type="PRINTS" id="PR00237">
    <property type="entry name" value="GPCRRHODOPSN"/>
</dbReference>
<dbReference type="PRINTS" id="PR00534">
    <property type="entry name" value="MCRFAMILY"/>
</dbReference>
<dbReference type="PRINTS" id="PR00536">
    <property type="entry name" value="MELNOCYTESHR"/>
</dbReference>
<dbReference type="SMART" id="SM01381">
    <property type="entry name" value="7TM_GPCR_Srsx"/>
    <property type="match status" value="1"/>
</dbReference>
<dbReference type="SUPFAM" id="SSF81321">
    <property type="entry name" value="Family A G protein-coupled receptor-like"/>
    <property type="match status" value="1"/>
</dbReference>
<dbReference type="PROSITE" id="PS00237">
    <property type="entry name" value="G_PROTEIN_RECEP_F1_1"/>
    <property type="match status" value="1"/>
</dbReference>
<dbReference type="PROSITE" id="PS50262">
    <property type="entry name" value="G_PROTEIN_RECEP_F1_2"/>
    <property type="match status" value="1"/>
</dbReference>
<accession>Q864G1</accession>
<organism>
    <name type="scientific">Alouatta pigra</name>
    <name type="common">Guatemalan howler monkey</name>
    <name type="synonym">Mexican black howler monkey</name>
    <dbReference type="NCBI Taxonomy" id="182253"/>
    <lineage>
        <taxon>Eukaryota</taxon>
        <taxon>Metazoa</taxon>
        <taxon>Chordata</taxon>
        <taxon>Craniata</taxon>
        <taxon>Vertebrata</taxon>
        <taxon>Euteleostomi</taxon>
        <taxon>Mammalia</taxon>
        <taxon>Eutheria</taxon>
        <taxon>Euarchontoglires</taxon>
        <taxon>Primates</taxon>
        <taxon>Haplorrhini</taxon>
        <taxon>Platyrrhini</taxon>
        <taxon>Atelidae</taxon>
        <taxon>Alouattinae</taxon>
        <taxon>Alouatta</taxon>
    </lineage>
</organism>
<evidence type="ECO:0000250" key="1">
    <source>
        <dbReference type="UniProtKB" id="Q01726"/>
    </source>
</evidence>
<evidence type="ECO:0000255" key="2"/>
<evidence type="ECO:0000255" key="3">
    <source>
        <dbReference type="PROSITE-ProRule" id="PRU00521"/>
    </source>
</evidence>